<evidence type="ECO:0000250" key="1">
    <source>
        <dbReference type="UniProtKB" id="P03897"/>
    </source>
</evidence>
<evidence type="ECO:0000250" key="2">
    <source>
        <dbReference type="UniProtKB" id="P03898"/>
    </source>
</evidence>
<evidence type="ECO:0000255" key="3"/>
<evidence type="ECO:0000305" key="4"/>
<reference key="1">
    <citation type="journal article" date="1995" name="Proc. Natl. Acad. Sci. U.S.A.">
        <title>Recent African origin of modern humans revealed by complete sequences of hominoid mitochondrial DNAs.</title>
        <authorList>
            <person name="Horai S."/>
            <person name="Hayasaka K."/>
            <person name="Kondo R."/>
            <person name="Tsugane K."/>
            <person name="Takahata N."/>
        </authorList>
    </citation>
    <scope>NUCLEOTIDE SEQUENCE [GENOMIC DNA]</scope>
</reference>
<proteinExistence type="inferred from homology"/>
<dbReference type="EC" id="7.1.1.2" evidence="1"/>
<dbReference type="EMBL" id="D38113">
    <property type="protein sequence ID" value="BAA85273.1"/>
    <property type="molecule type" value="Genomic_DNA"/>
</dbReference>
<dbReference type="RefSeq" id="NP_008193.1">
    <property type="nucleotide sequence ID" value="NC_001643.1"/>
</dbReference>
<dbReference type="SMR" id="Q9T9V8"/>
<dbReference type="FunCoup" id="Q9T9V8">
    <property type="interactions" value="244"/>
</dbReference>
<dbReference type="STRING" id="9598.ENSPTRP00000061401"/>
<dbReference type="PaxDb" id="9598-ENSPTRP00000061401"/>
<dbReference type="Ensembl" id="ENSPTRT00000076404.1">
    <property type="protein sequence ID" value="ENSPTRP00000061401.1"/>
    <property type="gene ID" value="ENSPTRG00000042628.1"/>
</dbReference>
<dbReference type="GeneID" id="807870"/>
<dbReference type="KEGG" id="ptr:807870"/>
<dbReference type="CTD" id="4537"/>
<dbReference type="VGNC" id="VGNC:11720">
    <property type="gene designation" value="MT-ND3"/>
</dbReference>
<dbReference type="eggNOG" id="KOG4662">
    <property type="taxonomic scope" value="Eukaryota"/>
</dbReference>
<dbReference type="GeneTree" id="ENSGT00390000011605"/>
<dbReference type="HOGENOM" id="CLU_119549_3_1_1"/>
<dbReference type="InParanoid" id="Q9T9V8"/>
<dbReference type="OMA" id="GPRRYNR"/>
<dbReference type="Proteomes" id="UP000002277">
    <property type="component" value="Mitochondrion"/>
</dbReference>
<dbReference type="Bgee" id="ENSPTRG00000042628">
    <property type="expression patterns" value="Expressed in Brodmann (1909) area 10 and 20 other cell types or tissues"/>
</dbReference>
<dbReference type="GO" id="GO:0005743">
    <property type="term" value="C:mitochondrial inner membrane"/>
    <property type="evidence" value="ECO:0000250"/>
    <property type="project" value="UniProtKB"/>
</dbReference>
<dbReference type="GO" id="GO:0045271">
    <property type="term" value="C:respiratory chain complex I"/>
    <property type="evidence" value="ECO:0000318"/>
    <property type="project" value="GO_Central"/>
</dbReference>
<dbReference type="GO" id="GO:0008137">
    <property type="term" value="F:NADH dehydrogenase (ubiquinone) activity"/>
    <property type="evidence" value="ECO:0000250"/>
    <property type="project" value="UniProtKB"/>
</dbReference>
<dbReference type="GO" id="GO:0006120">
    <property type="term" value="P:mitochondrial electron transport, NADH to ubiquinone"/>
    <property type="evidence" value="ECO:0000250"/>
    <property type="project" value="UniProtKB"/>
</dbReference>
<dbReference type="FunFam" id="1.20.58.1610:FF:000004">
    <property type="entry name" value="NADH-quinone oxidoreductase subunit A"/>
    <property type="match status" value="1"/>
</dbReference>
<dbReference type="Gene3D" id="1.20.58.1610">
    <property type="entry name" value="NADH:ubiquinone/plastoquinone oxidoreductase, chain 3"/>
    <property type="match status" value="1"/>
</dbReference>
<dbReference type="InterPro" id="IPR000440">
    <property type="entry name" value="NADH_UbQ/plastoQ_OxRdtase_su3"/>
</dbReference>
<dbReference type="InterPro" id="IPR038430">
    <property type="entry name" value="NDAH_ubi_oxred_su3_sf"/>
</dbReference>
<dbReference type="PANTHER" id="PTHR11058">
    <property type="entry name" value="NADH-UBIQUINONE OXIDOREDUCTASE CHAIN 3"/>
    <property type="match status" value="1"/>
</dbReference>
<dbReference type="PANTHER" id="PTHR11058:SF9">
    <property type="entry name" value="NADH-UBIQUINONE OXIDOREDUCTASE CHAIN 3"/>
    <property type="match status" value="1"/>
</dbReference>
<dbReference type="Pfam" id="PF00507">
    <property type="entry name" value="Oxidored_q4"/>
    <property type="match status" value="1"/>
</dbReference>
<geneLocation type="mitochondrion"/>
<keyword id="KW-0249">Electron transport</keyword>
<keyword id="KW-0472">Membrane</keyword>
<keyword id="KW-0496">Mitochondrion</keyword>
<keyword id="KW-0999">Mitochondrion inner membrane</keyword>
<keyword id="KW-0520">NAD</keyword>
<keyword id="KW-1185">Reference proteome</keyword>
<keyword id="KW-0679">Respiratory chain</keyword>
<keyword id="KW-1278">Translocase</keyword>
<keyword id="KW-0812">Transmembrane</keyword>
<keyword id="KW-1133">Transmembrane helix</keyword>
<keyword id="KW-0813">Transport</keyword>
<keyword id="KW-0830">Ubiquinone</keyword>
<comment type="function">
    <text evidence="1">Core subunit of the mitochondrial membrane respiratory chain NADH dehydrogenase (Complex I) which catalyzes electron transfer from NADH through the respiratory chain, using ubiquinone as an electron acceptor. Essential for the catalytic activity of complex I.</text>
</comment>
<comment type="catalytic activity">
    <reaction evidence="1">
        <text>a ubiquinone + NADH + 5 H(+)(in) = a ubiquinol + NAD(+) + 4 H(+)(out)</text>
        <dbReference type="Rhea" id="RHEA:29091"/>
        <dbReference type="Rhea" id="RHEA-COMP:9565"/>
        <dbReference type="Rhea" id="RHEA-COMP:9566"/>
        <dbReference type="ChEBI" id="CHEBI:15378"/>
        <dbReference type="ChEBI" id="CHEBI:16389"/>
        <dbReference type="ChEBI" id="CHEBI:17976"/>
        <dbReference type="ChEBI" id="CHEBI:57540"/>
        <dbReference type="ChEBI" id="CHEBI:57945"/>
        <dbReference type="EC" id="7.1.1.2"/>
    </reaction>
</comment>
<comment type="subunit">
    <text evidence="1">Core subunit of respiratory chain NADH dehydrogenase (Complex I) which is composed of 45 different subunits. Interacts with TMEM186. Interacts with TMEM242 (By similarity).</text>
</comment>
<comment type="subcellular location">
    <subcellularLocation>
        <location evidence="2">Mitochondrion inner membrane</location>
        <topology evidence="3">Multi-pass membrane protein</topology>
    </subcellularLocation>
</comment>
<comment type="similarity">
    <text evidence="4">Belongs to the complex I subunit 3 family.</text>
</comment>
<organism>
    <name type="scientific">Pan troglodytes</name>
    <name type="common">Chimpanzee</name>
    <dbReference type="NCBI Taxonomy" id="9598"/>
    <lineage>
        <taxon>Eukaryota</taxon>
        <taxon>Metazoa</taxon>
        <taxon>Chordata</taxon>
        <taxon>Craniata</taxon>
        <taxon>Vertebrata</taxon>
        <taxon>Euteleostomi</taxon>
        <taxon>Mammalia</taxon>
        <taxon>Eutheria</taxon>
        <taxon>Euarchontoglires</taxon>
        <taxon>Primates</taxon>
        <taxon>Haplorrhini</taxon>
        <taxon>Catarrhini</taxon>
        <taxon>Hominidae</taxon>
        <taxon>Pan</taxon>
    </lineage>
</organism>
<gene>
    <name evidence="1" type="primary">MT-ND3</name>
    <name type="synonym">MTND3</name>
    <name type="synonym">NADH3</name>
    <name type="synonym">ND3</name>
</gene>
<protein>
    <recommendedName>
        <fullName evidence="1">NADH-ubiquinone oxidoreductase chain 3</fullName>
        <ecNumber evidence="1">7.1.1.2</ecNumber>
    </recommendedName>
    <alternativeName>
        <fullName>NADH dehydrogenase subunit 3</fullName>
    </alternativeName>
</protein>
<feature type="chain" id="PRO_0000117788" description="NADH-ubiquinone oxidoreductase chain 3">
    <location>
        <begin position="1"/>
        <end position="115"/>
    </location>
</feature>
<feature type="transmembrane region" description="Helical" evidence="3">
    <location>
        <begin position="3"/>
        <end position="23"/>
    </location>
</feature>
<feature type="transmembrane region" description="Helical" evidence="3">
    <location>
        <begin position="55"/>
        <end position="75"/>
    </location>
</feature>
<feature type="transmembrane region" description="Helical" evidence="3">
    <location>
        <begin position="84"/>
        <end position="104"/>
    </location>
</feature>
<name>NU3M_PANTR</name>
<sequence>MNFVLILMTNTLLALLLMIITFWLPQLNSYMEKSTPYECGFDPMSPARVPFSMKFFLVAITFLLFDLEIALLLPLPWALQTANLPLMVTSSLLLITILALSLAYEWLQKGLDWTE</sequence>
<accession>Q9T9V8</accession>